<comment type="function">
    <text evidence="1">Flagellum-specific muramidase which hydrolyzes the peptidoglycan layer to assemble the rod structure in the periplasmic space.</text>
</comment>
<comment type="subcellular location">
    <subcellularLocation>
        <location evidence="1">Periplasm</location>
    </subcellularLocation>
</comment>
<comment type="miscellaneous">
    <text>Probably exported via the flagellum-specific export pathway.</text>
</comment>
<comment type="similarity">
    <text evidence="3">In the N-terminal section; belongs to the FlgJ family.</text>
</comment>
<comment type="similarity">
    <text evidence="3">In the C-terminal section; belongs to the glycosyl hydrolase 73 family.</text>
</comment>
<reference key="1">
    <citation type="journal article" date="1996" name="DNA Res.">
        <title>A 718-kb DNA sequence of the Escherichia coli K-12 genome corresponding to the 12.7-28.0 min region on the linkage map.</title>
        <authorList>
            <person name="Oshima T."/>
            <person name="Aiba H."/>
            <person name="Baba T."/>
            <person name="Fujita K."/>
            <person name="Hayashi K."/>
            <person name="Honjo A."/>
            <person name="Ikemoto K."/>
            <person name="Inada T."/>
            <person name="Itoh T."/>
            <person name="Kajihara M."/>
            <person name="Kanai K."/>
            <person name="Kashimoto K."/>
            <person name="Kimura S."/>
            <person name="Kitagawa M."/>
            <person name="Makino K."/>
            <person name="Masuda S."/>
            <person name="Miki T."/>
            <person name="Mizobuchi K."/>
            <person name="Mori H."/>
            <person name="Motomura K."/>
            <person name="Nakamura Y."/>
            <person name="Nashimoto H."/>
            <person name="Nishio Y."/>
            <person name="Saito N."/>
            <person name="Sampei G."/>
            <person name="Seki Y."/>
            <person name="Tagami H."/>
            <person name="Takemoto K."/>
            <person name="Wada C."/>
            <person name="Yamamoto Y."/>
            <person name="Yano M."/>
            <person name="Horiuchi T."/>
        </authorList>
    </citation>
    <scope>NUCLEOTIDE SEQUENCE [LARGE SCALE GENOMIC DNA]</scope>
    <source>
        <strain>K12 / W3110 / ATCC 27325 / DSM 5911</strain>
    </source>
</reference>
<reference key="2">
    <citation type="journal article" date="1997" name="Science">
        <title>The complete genome sequence of Escherichia coli K-12.</title>
        <authorList>
            <person name="Blattner F.R."/>
            <person name="Plunkett G. III"/>
            <person name="Bloch C.A."/>
            <person name="Perna N.T."/>
            <person name="Burland V."/>
            <person name="Riley M."/>
            <person name="Collado-Vides J."/>
            <person name="Glasner J.D."/>
            <person name="Rode C.K."/>
            <person name="Mayhew G.F."/>
            <person name="Gregor J."/>
            <person name="Davis N.W."/>
            <person name="Kirkpatrick H.A."/>
            <person name="Goeden M.A."/>
            <person name="Rose D.J."/>
            <person name="Mau B."/>
            <person name="Shao Y."/>
        </authorList>
    </citation>
    <scope>NUCLEOTIDE SEQUENCE [LARGE SCALE GENOMIC DNA]</scope>
    <source>
        <strain>K12 / MG1655 / ATCC 47076</strain>
    </source>
</reference>
<reference key="3">
    <citation type="journal article" date="2006" name="Mol. Syst. Biol.">
        <title>Highly accurate genome sequences of Escherichia coli K-12 strains MG1655 and W3110.</title>
        <authorList>
            <person name="Hayashi K."/>
            <person name="Morooka N."/>
            <person name="Yamamoto Y."/>
            <person name="Fujita K."/>
            <person name="Isono K."/>
            <person name="Choi S."/>
            <person name="Ohtsubo E."/>
            <person name="Baba T."/>
            <person name="Wanner B.L."/>
            <person name="Mori H."/>
            <person name="Horiuchi T."/>
        </authorList>
    </citation>
    <scope>NUCLEOTIDE SEQUENCE [LARGE SCALE GENOMIC DNA]</scope>
    <source>
        <strain>K12 / W3110 / ATCC 27325 / DSM 5911</strain>
    </source>
</reference>
<sequence>MISDSKLLASAAWDAQSLNELKAKAGEDPAANIRPVARQVEGMFVQMMLKSMRDALPKDGLFSSEHTRLYTSMYDQQIAQQMTAGKGLGLAEMMVKQMTPEQPLPEESTPAAPMKFPLETVVRYQNQALSQLVQKAVPRNYDDSLPGDSKAFLAQLSLPAQLASQQSGVPHHLILAQAALESGWGQRQIRRENGEPSYNLFGVKASGNWKGPVTEITTTEYENGEAKKVKAKFRVYSSYLEALSDYVGLLTRNPRYAAVTTAASAEQGAQALQDAGYATDPHYARKLTNMIQQMKSISDKVSKTYSMNIDNLF</sequence>
<keyword id="KW-1005">Bacterial flagellum biogenesis</keyword>
<keyword id="KW-0961">Cell wall biogenesis/degradation</keyword>
<keyword id="KW-0326">Glycosidase</keyword>
<keyword id="KW-0378">Hydrolase</keyword>
<keyword id="KW-0574">Periplasm</keyword>
<keyword id="KW-1185">Reference proteome</keyword>
<organism>
    <name type="scientific">Escherichia coli (strain K12)</name>
    <dbReference type="NCBI Taxonomy" id="83333"/>
    <lineage>
        <taxon>Bacteria</taxon>
        <taxon>Pseudomonadati</taxon>
        <taxon>Pseudomonadota</taxon>
        <taxon>Gammaproteobacteria</taxon>
        <taxon>Enterobacterales</taxon>
        <taxon>Enterobacteriaceae</taxon>
        <taxon>Escherichia</taxon>
    </lineage>
</organism>
<protein>
    <recommendedName>
        <fullName>Peptidoglycan hydrolase FlgJ</fullName>
        <ecNumber>3.2.1.-</ecNumber>
    </recommendedName>
    <alternativeName>
        <fullName>Muramidase FlgJ</fullName>
    </alternativeName>
</protein>
<gene>
    <name type="primary">flgJ</name>
    <name type="synonym">fla FX</name>
    <name type="synonym">flaZ</name>
    <name type="ordered locus">b1081</name>
    <name type="ordered locus">JW1068</name>
</gene>
<feature type="chain" id="PRO_0000165705" description="Peptidoglycan hydrolase FlgJ">
    <location>
        <begin position="1"/>
        <end position="313"/>
    </location>
</feature>
<feature type="region of interest" description="Catalytic">
    <location>
        <begin position="148"/>
        <end position="313"/>
    </location>
</feature>
<feature type="active site" evidence="2">
    <location>
        <position position="220"/>
    </location>
</feature>
<feature type="active site" evidence="2">
    <location>
        <position position="245"/>
    </location>
</feature>
<proteinExistence type="inferred from homology"/>
<accession>P75942</accession>
<dbReference type="EC" id="3.2.1.-"/>
<dbReference type="EMBL" id="U00096">
    <property type="protein sequence ID" value="AAC74165.1"/>
    <property type="molecule type" value="Genomic_DNA"/>
</dbReference>
<dbReference type="EMBL" id="AP009048">
    <property type="protein sequence ID" value="BAA35890.1"/>
    <property type="molecule type" value="Genomic_DNA"/>
</dbReference>
<dbReference type="PIR" id="F64851">
    <property type="entry name" value="F64851"/>
</dbReference>
<dbReference type="RefSeq" id="NP_415599.1">
    <property type="nucleotide sequence ID" value="NC_000913.3"/>
</dbReference>
<dbReference type="RefSeq" id="WP_001295441.1">
    <property type="nucleotide sequence ID" value="NZ_SSZK01000053.1"/>
</dbReference>
<dbReference type="SMR" id="P75942"/>
<dbReference type="BioGRID" id="4261020">
    <property type="interactions" value="120"/>
</dbReference>
<dbReference type="FunCoup" id="P75942">
    <property type="interactions" value="78"/>
</dbReference>
<dbReference type="IntAct" id="P75942">
    <property type="interactions" value="11"/>
</dbReference>
<dbReference type="STRING" id="511145.b1081"/>
<dbReference type="CAZy" id="GH73">
    <property type="family name" value="Glycoside Hydrolase Family 73"/>
</dbReference>
<dbReference type="PaxDb" id="511145-b1081"/>
<dbReference type="EnsemblBacteria" id="AAC74165">
    <property type="protein sequence ID" value="AAC74165"/>
    <property type="gene ID" value="b1081"/>
</dbReference>
<dbReference type="GeneID" id="93776326"/>
<dbReference type="GeneID" id="947456"/>
<dbReference type="KEGG" id="ecj:JW1068"/>
<dbReference type="KEGG" id="eco:b1081"/>
<dbReference type="KEGG" id="ecoc:C3026_06550"/>
<dbReference type="PATRIC" id="fig|1411691.4.peg.1187"/>
<dbReference type="EchoBASE" id="EB4020"/>
<dbReference type="eggNOG" id="COG1705">
    <property type="taxonomic scope" value="Bacteria"/>
</dbReference>
<dbReference type="eggNOG" id="COG3951">
    <property type="taxonomic scope" value="Bacteria"/>
</dbReference>
<dbReference type="HOGENOM" id="CLU_013771_3_0_6"/>
<dbReference type="InParanoid" id="P75942"/>
<dbReference type="OMA" id="GHETGWG"/>
<dbReference type="OrthoDB" id="289937at2"/>
<dbReference type="PhylomeDB" id="P75942"/>
<dbReference type="BioCyc" id="EcoCyc:G366-MONOMER"/>
<dbReference type="PRO" id="PR:P75942"/>
<dbReference type="Proteomes" id="UP000000625">
    <property type="component" value="Chromosome"/>
</dbReference>
<dbReference type="GO" id="GO:0042597">
    <property type="term" value="C:periplasmic space"/>
    <property type="evidence" value="ECO:0007669"/>
    <property type="project" value="UniProtKB-SubCell"/>
</dbReference>
<dbReference type="GO" id="GO:0004040">
    <property type="term" value="F:amidase activity"/>
    <property type="evidence" value="ECO:0007669"/>
    <property type="project" value="InterPro"/>
</dbReference>
<dbReference type="GO" id="GO:0016798">
    <property type="term" value="F:hydrolase activity, acting on glycosyl bonds"/>
    <property type="evidence" value="ECO:0007669"/>
    <property type="project" value="UniProtKB-KW"/>
</dbReference>
<dbReference type="GO" id="GO:0044780">
    <property type="term" value="P:bacterial-type flagellum assembly"/>
    <property type="evidence" value="ECO:0007669"/>
    <property type="project" value="InterPro"/>
</dbReference>
<dbReference type="GO" id="GO:0071973">
    <property type="term" value="P:bacterial-type flagellum-dependent cell motility"/>
    <property type="evidence" value="ECO:0000315"/>
    <property type="project" value="EcoCyc"/>
</dbReference>
<dbReference type="GO" id="GO:0071555">
    <property type="term" value="P:cell wall organization"/>
    <property type="evidence" value="ECO:0007669"/>
    <property type="project" value="UniProtKB-KW"/>
</dbReference>
<dbReference type="FunFam" id="2.10.70.40:FF:000001">
    <property type="entry name" value="Flagellar assembly peptidoglycan hydrolase FlgJ"/>
    <property type="match status" value="1"/>
</dbReference>
<dbReference type="Gene3D" id="1.10.530.10">
    <property type="match status" value="1"/>
</dbReference>
<dbReference type="Gene3D" id="2.10.70.40">
    <property type="entry name" value="peptidoglycan hydrolase"/>
    <property type="match status" value="1"/>
</dbReference>
<dbReference type="InterPro" id="IPR019301">
    <property type="entry name" value="Flagellar_prot_FlgJ_N"/>
</dbReference>
<dbReference type="InterPro" id="IPR013377">
    <property type="entry name" value="FlgJ"/>
</dbReference>
<dbReference type="InterPro" id="IPR051056">
    <property type="entry name" value="Glycosyl_Hydrolase_73"/>
</dbReference>
<dbReference type="InterPro" id="IPR002901">
    <property type="entry name" value="MGlyc_endo_b_GlcNAc-like_dom"/>
</dbReference>
<dbReference type="NCBIfam" id="TIGR02541">
    <property type="entry name" value="flagell_FlgJ"/>
    <property type="match status" value="1"/>
</dbReference>
<dbReference type="PANTHER" id="PTHR33308">
    <property type="entry name" value="PEPTIDOGLYCAN HYDROLASE FLGJ"/>
    <property type="match status" value="1"/>
</dbReference>
<dbReference type="PANTHER" id="PTHR33308:SF9">
    <property type="entry name" value="PEPTIDOGLYCAN HYDROLASE FLGJ"/>
    <property type="match status" value="1"/>
</dbReference>
<dbReference type="Pfam" id="PF01832">
    <property type="entry name" value="Glucosaminidase"/>
    <property type="match status" value="1"/>
</dbReference>
<dbReference type="Pfam" id="PF10135">
    <property type="entry name" value="Rod-binding"/>
    <property type="match status" value="1"/>
</dbReference>
<dbReference type="PRINTS" id="PR01002">
    <property type="entry name" value="FLGFLGJ"/>
</dbReference>
<dbReference type="SMART" id="SM00047">
    <property type="entry name" value="LYZ2"/>
    <property type="match status" value="1"/>
</dbReference>
<evidence type="ECO:0000250" key="1"/>
<evidence type="ECO:0000255" key="2"/>
<evidence type="ECO:0000305" key="3"/>
<name>FLGJ_ECOLI</name>